<gene>
    <name type="ordered locus">CD630_07950</name>
</gene>
<proteinExistence type="inferred from homology"/>
<accession>Q189Y9</accession>
<feature type="chain" id="PRO_0000257048" description="Probable transcriptional regulatory protein CD630_07950">
    <location>
        <begin position="1"/>
        <end position="239"/>
    </location>
</feature>
<name>Y795_CLOD6</name>
<keyword id="KW-0963">Cytoplasm</keyword>
<keyword id="KW-0238">DNA-binding</keyword>
<keyword id="KW-1185">Reference proteome</keyword>
<keyword id="KW-0804">Transcription</keyword>
<keyword id="KW-0805">Transcription regulation</keyword>
<reference key="1">
    <citation type="journal article" date="2006" name="Nat. Genet.">
        <title>The multidrug-resistant human pathogen Clostridium difficile has a highly mobile, mosaic genome.</title>
        <authorList>
            <person name="Sebaihia M."/>
            <person name="Wren B.W."/>
            <person name="Mullany P."/>
            <person name="Fairweather N.F."/>
            <person name="Minton N."/>
            <person name="Stabler R."/>
            <person name="Thomson N.R."/>
            <person name="Roberts A.P."/>
            <person name="Cerdeno-Tarraga A.M."/>
            <person name="Wang H."/>
            <person name="Holden M.T.G."/>
            <person name="Wright A."/>
            <person name="Churcher C."/>
            <person name="Quail M.A."/>
            <person name="Baker S."/>
            <person name="Bason N."/>
            <person name="Brooks K."/>
            <person name="Chillingworth T."/>
            <person name="Cronin A."/>
            <person name="Davis P."/>
            <person name="Dowd L."/>
            <person name="Fraser A."/>
            <person name="Feltwell T."/>
            <person name="Hance Z."/>
            <person name="Holroyd S."/>
            <person name="Jagels K."/>
            <person name="Moule S."/>
            <person name="Mungall K."/>
            <person name="Price C."/>
            <person name="Rabbinowitsch E."/>
            <person name="Sharp S."/>
            <person name="Simmonds M."/>
            <person name="Stevens K."/>
            <person name="Unwin L."/>
            <person name="Whithead S."/>
            <person name="Dupuy B."/>
            <person name="Dougan G."/>
            <person name="Barrell B."/>
            <person name="Parkhill J."/>
        </authorList>
    </citation>
    <scope>NUCLEOTIDE SEQUENCE [LARGE SCALE GENOMIC DNA]</scope>
    <source>
        <strain>630</strain>
    </source>
</reference>
<protein>
    <recommendedName>
        <fullName evidence="1">Probable transcriptional regulatory protein CD630_07950</fullName>
    </recommendedName>
</protein>
<evidence type="ECO:0000255" key="1">
    <source>
        <dbReference type="HAMAP-Rule" id="MF_00693"/>
    </source>
</evidence>
<sequence length="239" mass="26045">MGRIGNIINRKGKQDAQRAKIFTKHARAIAVAAKEGGADPEYNAALKTAIEKAKADNMPNDNIDRAIAKGAGAGAGEDYETIVYEGYGPGGVAVIVETLTDNKNRTAGNVRYYFDKNGGNLGTSGCVSFMFDKKGQILVGLGDGVSEEELMDVALEAGAEDFITEEDGYEIITTPEDFSSVRDELKAKGYEFISADVKMIPQTTTVLTEESHLKMMNKLVDMLEEDDDVQDIYHNWEVE</sequence>
<dbReference type="EMBL" id="AM180355">
    <property type="protein sequence ID" value="CAJ67629.1"/>
    <property type="molecule type" value="Genomic_DNA"/>
</dbReference>
<dbReference type="RefSeq" id="WP_003437537.1">
    <property type="nucleotide sequence ID" value="NZ_JAUPES010000005.1"/>
</dbReference>
<dbReference type="RefSeq" id="YP_001087272.1">
    <property type="nucleotide sequence ID" value="NC_009089.1"/>
</dbReference>
<dbReference type="SMR" id="Q189Y9"/>
<dbReference type="STRING" id="272563.CD630_07950"/>
<dbReference type="EnsemblBacteria" id="CAJ67629">
    <property type="protein sequence ID" value="CAJ67629"/>
    <property type="gene ID" value="CD630_07950"/>
</dbReference>
<dbReference type="KEGG" id="cdf:CD630_07950"/>
<dbReference type="KEGG" id="pdc:CDIF630_00914"/>
<dbReference type="PATRIC" id="fig|272563.120.peg.818"/>
<dbReference type="eggNOG" id="COG0217">
    <property type="taxonomic scope" value="Bacteria"/>
</dbReference>
<dbReference type="OrthoDB" id="9781053at2"/>
<dbReference type="PhylomeDB" id="Q189Y9"/>
<dbReference type="BioCyc" id="PDIF272563:G12WB-906-MONOMER"/>
<dbReference type="Proteomes" id="UP000001978">
    <property type="component" value="Chromosome"/>
</dbReference>
<dbReference type="GO" id="GO:0005829">
    <property type="term" value="C:cytosol"/>
    <property type="evidence" value="ECO:0007669"/>
    <property type="project" value="TreeGrafter"/>
</dbReference>
<dbReference type="GO" id="GO:0003677">
    <property type="term" value="F:DNA binding"/>
    <property type="evidence" value="ECO:0007669"/>
    <property type="project" value="UniProtKB-UniRule"/>
</dbReference>
<dbReference type="GO" id="GO:0006355">
    <property type="term" value="P:regulation of DNA-templated transcription"/>
    <property type="evidence" value="ECO:0007669"/>
    <property type="project" value="UniProtKB-UniRule"/>
</dbReference>
<dbReference type="FunFam" id="1.10.10.200:FF:000002">
    <property type="entry name" value="Probable transcriptional regulatory protein CLM62_37755"/>
    <property type="match status" value="1"/>
</dbReference>
<dbReference type="FunFam" id="3.30.70.980:FF:000002">
    <property type="entry name" value="Probable transcriptional regulatory protein YebC"/>
    <property type="match status" value="1"/>
</dbReference>
<dbReference type="Gene3D" id="1.10.10.200">
    <property type="match status" value="1"/>
</dbReference>
<dbReference type="Gene3D" id="3.30.70.980">
    <property type="match status" value="2"/>
</dbReference>
<dbReference type="HAMAP" id="MF_00693">
    <property type="entry name" value="Transcrip_reg_TACO1"/>
    <property type="match status" value="1"/>
</dbReference>
<dbReference type="InterPro" id="IPR017856">
    <property type="entry name" value="Integrase-like_N"/>
</dbReference>
<dbReference type="InterPro" id="IPR048300">
    <property type="entry name" value="TACO1_YebC-like_2nd/3rd_dom"/>
</dbReference>
<dbReference type="InterPro" id="IPR049083">
    <property type="entry name" value="TACO1_YebC_N"/>
</dbReference>
<dbReference type="InterPro" id="IPR002876">
    <property type="entry name" value="Transcrip_reg_TACO1-like"/>
</dbReference>
<dbReference type="InterPro" id="IPR026564">
    <property type="entry name" value="Transcrip_reg_TACO1-like_dom3"/>
</dbReference>
<dbReference type="InterPro" id="IPR029072">
    <property type="entry name" value="YebC-like"/>
</dbReference>
<dbReference type="NCBIfam" id="NF001030">
    <property type="entry name" value="PRK00110.1"/>
    <property type="match status" value="1"/>
</dbReference>
<dbReference type="NCBIfam" id="NF009044">
    <property type="entry name" value="PRK12378.1"/>
    <property type="match status" value="1"/>
</dbReference>
<dbReference type="NCBIfam" id="TIGR01033">
    <property type="entry name" value="YebC/PmpR family DNA-binding transcriptional regulator"/>
    <property type="match status" value="1"/>
</dbReference>
<dbReference type="PANTHER" id="PTHR12532:SF6">
    <property type="entry name" value="TRANSCRIPTIONAL REGULATORY PROTEIN YEBC-RELATED"/>
    <property type="match status" value="1"/>
</dbReference>
<dbReference type="PANTHER" id="PTHR12532">
    <property type="entry name" value="TRANSLATIONAL ACTIVATOR OF CYTOCHROME C OXIDASE 1"/>
    <property type="match status" value="1"/>
</dbReference>
<dbReference type="Pfam" id="PF20772">
    <property type="entry name" value="TACO1_YebC_N"/>
    <property type="match status" value="1"/>
</dbReference>
<dbReference type="Pfam" id="PF01709">
    <property type="entry name" value="Transcrip_reg"/>
    <property type="match status" value="1"/>
</dbReference>
<dbReference type="SUPFAM" id="SSF75625">
    <property type="entry name" value="YebC-like"/>
    <property type="match status" value="1"/>
</dbReference>
<organism>
    <name type="scientific">Clostridioides difficile (strain 630)</name>
    <name type="common">Peptoclostridium difficile</name>
    <dbReference type="NCBI Taxonomy" id="272563"/>
    <lineage>
        <taxon>Bacteria</taxon>
        <taxon>Bacillati</taxon>
        <taxon>Bacillota</taxon>
        <taxon>Clostridia</taxon>
        <taxon>Peptostreptococcales</taxon>
        <taxon>Peptostreptococcaceae</taxon>
        <taxon>Clostridioides</taxon>
    </lineage>
</organism>
<comment type="subcellular location">
    <subcellularLocation>
        <location evidence="1">Cytoplasm</location>
    </subcellularLocation>
</comment>
<comment type="similarity">
    <text evidence="1">Belongs to the TACO1 family.</text>
</comment>